<sequence length="151" mass="16670">MSVERTFLAIKPDGVQRGLVGEILGRFERKGFKLVGLKQLIPSKELAEKHYGVHKERPFFTGLVGFITSGPVVAMVWEGDGVILSARKLIGATKPLEAEPGTIRGDLGINIGRNVIHGSDGPETASFEIDLWFNSSELNNWNPSDQKWRVE</sequence>
<dbReference type="EC" id="2.7.4.6" evidence="1"/>
<dbReference type="EMBL" id="AE017126">
    <property type="protein sequence ID" value="AAP99096.1"/>
    <property type="status" value="ALT_INIT"/>
    <property type="molecule type" value="Genomic_DNA"/>
</dbReference>
<dbReference type="RefSeq" id="NP_874444.1">
    <property type="nucleotide sequence ID" value="NC_005042.1"/>
</dbReference>
<dbReference type="RefSeq" id="WP_036892097.1">
    <property type="nucleotide sequence ID" value="NC_005042.1"/>
</dbReference>
<dbReference type="SMR" id="Q7VEG3"/>
<dbReference type="STRING" id="167539.Pro_0050"/>
<dbReference type="EnsemblBacteria" id="AAP99096">
    <property type="protein sequence ID" value="AAP99096"/>
    <property type="gene ID" value="Pro_0050"/>
</dbReference>
<dbReference type="KEGG" id="pma:Pro_0050"/>
<dbReference type="PATRIC" id="fig|167539.5.peg.52"/>
<dbReference type="eggNOG" id="COG0105">
    <property type="taxonomic scope" value="Bacteria"/>
</dbReference>
<dbReference type="HOGENOM" id="CLU_060216_6_3_3"/>
<dbReference type="OrthoDB" id="9801161at2"/>
<dbReference type="Proteomes" id="UP000001420">
    <property type="component" value="Chromosome"/>
</dbReference>
<dbReference type="GO" id="GO:0005737">
    <property type="term" value="C:cytoplasm"/>
    <property type="evidence" value="ECO:0007669"/>
    <property type="project" value="UniProtKB-SubCell"/>
</dbReference>
<dbReference type="GO" id="GO:0005524">
    <property type="term" value="F:ATP binding"/>
    <property type="evidence" value="ECO:0007669"/>
    <property type="project" value="UniProtKB-UniRule"/>
</dbReference>
<dbReference type="GO" id="GO:0046872">
    <property type="term" value="F:metal ion binding"/>
    <property type="evidence" value="ECO:0007669"/>
    <property type="project" value="UniProtKB-KW"/>
</dbReference>
<dbReference type="GO" id="GO:0004550">
    <property type="term" value="F:nucleoside diphosphate kinase activity"/>
    <property type="evidence" value="ECO:0007669"/>
    <property type="project" value="UniProtKB-UniRule"/>
</dbReference>
<dbReference type="GO" id="GO:0006241">
    <property type="term" value="P:CTP biosynthetic process"/>
    <property type="evidence" value="ECO:0007669"/>
    <property type="project" value="UniProtKB-UniRule"/>
</dbReference>
<dbReference type="GO" id="GO:0006183">
    <property type="term" value="P:GTP biosynthetic process"/>
    <property type="evidence" value="ECO:0007669"/>
    <property type="project" value="UniProtKB-UniRule"/>
</dbReference>
<dbReference type="GO" id="GO:0006228">
    <property type="term" value="P:UTP biosynthetic process"/>
    <property type="evidence" value="ECO:0007669"/>
    <property type="project" value="UniProtKB-UniRule"/>
</dbReference>
<dbReference type="CDD" id="cd04413">
    <property type="entry name" value="NDPk_I"/>
    <property type="match status" value="1"/>
</dbReference>
<dbReference type="FunFam" id="3.30.70.141:FF:000002">
    <property type="entry name" value="Nucleoside diphosphate kinase"/>
    <property type="match status" value="1"/>
</dbReference>
<dbReference type="Gene3D" id="3.30.70.141">
    <property type="entry name" value="Nucleoside diphosphate kinase-like domain"/>
    <property type="match status" value="1"/>
</dbReference>
<dbReference type="HAMAP" id="MF_00451">
    <property type="entry name" value="NDP_kinase"/>
    <property type="match status" value="1"/>
</dbReference>
<dbReference type="InterPro" id="IPR034907">
    <property type="entry name" value="NDK-like_dom"/>
</dbReference>
<dbReference type="InterPro" id="IPR036850">
    <property type="entry name" value="NDK-like_dom_sf"/>
</dbReference>
<dbReference type="InterPro" id="IPR001564">
    <property type="entry name" value="Nucleoside_diP_kinase"/>
</dbReference>
<dbReference type="InterPro" id="IPR023005">
    <property type="entry name" value="Nucleoside_diP_kinase_AS"/>
</dbReference>
<dbReference type="NCBIfam" id="NF001908">
    <property type="entry name" value="PRK00668.1"/>
    <property type="match status" value="1"/>
</dbReference>
<dbReference type="PANTHER" id="PTHR11349">
    <property type="entry name" value="NUCLEOSIDE DIPHOSPHATE KINASE"/>
    <property type="match status" value="1"/>
</dbReference>
<dbReference type="Pfam" id="PF00334">
    <property type="entry name" value="NDK"/>
    <property type="match status" value="1"/>
</dbReference>
<dbReference type="PRINTS" id="PR01243">
    <property type="entry name" value="NUCDPKINASE"/>
</dbReference>
<dbReference type="SMART" id="SM00562">
    <property type="entry name" value="NDK"/>
    <property type="match status" value="1"/>
</dbReference>
<dbReference type="SUPFAM" id="SSF54919">
    <property type="entry name" value="Nucleoside diphosphate kinase, NDK"/>
    <property type="match status" value="1"/>
</dbReference>
<dbReference type="PROSITE" id="PS00469">
    <property type="entry name" value="NDPK"/>
    <property type="match status" value="1"/>
</dbReference>
<dbReference type="PROSITE" id="PS51374">
    <property type="entry name" value="NDPK_LIKE"/>
    <property type="match status" value="1"/>
</dbReference>
<reference key="1">
    <citation type="journal article" date="2003" name="Proc. Natl. Acad. Sci. U.S.A.">
        <title>Genome sequence of the cyanobacterium Prochlorococcus marinus SS120, a nearly minimal oxyphototrophic genome.</title>
        <authorList>
            <person name="Dufresne A."/>
            <person name="Salanoubat M."/>
            <person name="Partensky F."/>
            <person name="Artiguenave F."/>
            <person name="Axmann I.M."/>
            <person name="Barbe V."/>
            <person name="Duprat S."/>
            <person name="Galperin M.Y."/>
            <person name="Koonin E.V."/>
            <person name="Le Gall F."/>
            <person name="Makarova K.S."/>
            <person name="Ostrowski M."/>
            <person name="Oztas S."/>
            <person name="Robert C."/>
            <person name="Rogozin I.B."/>
            <person name="Scanlan D.J."/>
            <person name="Tandeau de Marsac N."/>
            <person name="Weissenbach J."/>
            <person name="Wincker P."/>
            <person name="Wolf Y.I."/>
            <person name="Hess W.R."/>
        </authorList>
    </citation>
    <scope>NUCLEOTIDE SEQUENCE [LARGE SCALE GENOMIC DNA]</scope>
    <source>
        <strain>SARG / CCMP1375 / SS120</strain>
    </source>
</reference>
<keyword id="KW-0067">ATP-binding</keyword>
<keyword id="KW-0963">Cytoplasm</keyword>
<keyword id="KW-0418">Kinase</keyword>
<keyword id="KW-0460">Magnesium</keyword>
<keyword id="KW-0479">Metal-binding</keyword>
<keyword id="KW-0546">Nucleotide metabolism</keyword>
<keyword id="KW-0547">Nucleotide-binding</keyword>
<keyword id="KW-0597">Phosphoprotein</keyword>
<keyword id="KW-1185">Reference proteome</keyword>
<keyword id="KW-0808">Transferase</keyword>
<accession>Q7VEG3</accession>
<feature type="chain" id="PRO_0000137021" description="Nucleoside diphosphate kinase">
    <location>
        <begin position="1"/>
        <end position="151"/>
    </location>
</feature>
<feature type="active site" description="Pros-phosphohistidine intermediate" evidence="1">
    <location>
        <position position="117"/>
    </location>
</feature>
<feature type="binding site" evidence="1">
    <location>
        <position position="11"/>
    </location>
    <ligand>
        <name>ATP</name>
        <dbReference type="ChEBI" id="CHEBI:30616"/>
    </ligand>
</feature>
<feature type="binding site" evidence="1">
    <location>
        <position position="59"/>
    </location>
    <ligand>
        <name>ATP</name>
        <dbReference type="ChEBI" id="CHEBI:30616"/>
    </ligand>
</feature>
<feature type="binding site" evidence="1">
    <location>
        <position position="87"/>
    </location>
    <ligand>
        <name>ATP</name>
        <dbReference type="ChEBI" id="CHEBI:30616"/>
    </ligand>
</feature>
<feature type="binding site" evidence="1">
    <location>
        <position position="93"/>
    </location>
    <ligand>
        <name>ATP</name>
        <dbReference type="ChEBI" id="CHEBI:30616"/>
    </ligand>
</feature>
<feature type="binding site" evidence="1">
    <location>
        <position position="104"/>
    </location>
    <ligand>
        <name>ATP</name>
        <dbReference type="ChEBI" id="CHEBI:30616"/>
    </ligand>
</feature>
<feature type="binding site" evidence="1">
    <location>
        <position position="114"/>
    </location>
    <ligand>
        <name>ATP</name>
        <dbReference type="ChEBI" id="CHEBI:30616"/>
    </ligand>
</feature>
<comment type="function">
    <text evidence="1">Major role in the synthesis of nucleoside triphosphates other than ATP. The ATP gamma phosphate is transferred to the NDP beta phosphate via a ping-pong mechanism, using a phosphorylated active-site intermediate.</text>
</comment>
<comment type="catalytic activity">
    <reaction evidence="1">
        <text>a 2'-deoxyribonucleoside 5'-diphosphate + ATP = a 2'-deoxyribonucleoside 5'-triphosphate + ADP</text>
        <dbReference type="Rhea" id="RHEA:44640"/>
        <dbReference type="ChEBI" id="CHEBI:30616"/>
        <dbReference type="ChEBI" id="CHEBI:61560"/>
        <dbReference type="ChEBI" id="CHEBI:73316"/>
        <dbReference type="ChEBI" id="CHEBI:456216"/>
        <dbReference type="EC" id="2.7.4.6"/>
    </reaction>
</comment>
<comment type="catalytic activity">
    <reaction evidence="1">
        <text>a ribonucleoside 5'-diphosphate + ATP = a ribonucleoside 5'-triphosphate + ADP</text>
        <dbReference type="Rhea" id="RHEA:18113"/>
        <dbReference type="ChEBI" id="CHEBI:30616"/>
        <dbReference type="ChEBI" id="CHEBI:57930"/>
        <dbReference type="ChEBI" id="CHEBI:61557"/>
        <dbReference type="ChEBI" id="CHEBI:456216"/>
        <dbReference type="EC" id="2.7.4.6"/>
    </reaction>
</comment>
<comment type="cofactor">
    <cofactor evidence="1">
        <name>Mg(2+)</name>
        <dbReference type="ChEBI" id="CHEBI:18420"/>
    </cofactor>
</comment>
<comment type="subunit">
    <text evidence="1">Homotetramer.</text>
</comment>
<comment type="subcellular location">
    <subcellularLocation>
        <location evidence="1">Cytoplasm</location>
    </subcellularLocation>
</comment>
<comment type="similarity">
    <text evidence="1">Belongs to the NDK family.</text>
</comment>
<comment type="sequence caution" evidence="2">
    <conflict type="erroneous initiation">
        <sequence resource="EMBL-CDS" id="AAP99096"/>
    </conflict>
</comment>
<organism>
    <name type="scientific">Prochlorococcus marinus (strain SARG / CCMP1375 / SS120)</name>
    <dbReference type="NCBI Taxonomy" id="167539"/>
    <lineage>
        <taxon>Bacteria</taxon>
        <taxon>Bacillati</taxon>
        <taxon>Cyanobacteriota</taxon>
        <taxon>Cyanophyceae</taxon>
        <taxon>Synechococcales</taxon>
        <taxon>Prochlorococcaceae</taxon>
        <taxon>Prochlorococcus</taxon>
    </lineage>
</organism>
<proteinExistence type="inferred from homology"/>
<name>NDK_PROMA</name>
<evidence type="ECO:0000255" key="1">
    <source>
        <dbReference type="HAMAP-Rule" id="MF_00451"/>
    </source>
</evidence>
<evidence type="ECO:0000305" key="2"/>
<gene>
    <name evidence="1" type="primary">ndk</name>
    <name type="ordered locus">Pro_0050</name>
</gene>
<protein>
    <recommendedName>
        <fullName evidence="1">Nucleoside diphosphate kinase</fullName>
        <shortName evidence="1">NDK</shortName>
        <shortName evidence="1">NDP kinase</shortName>
        <ecNumber evidence="1">2.7.4.6</ecNumber>
    </recommendedName>
    <alternativeName>
        <fullName evidence="1">Nucleoside-2-P kinase</fullName>
    </alternativeName>
</protein>